<sequence>MSSLPPAIFLMGPTAAGKTDLAMALADALPCELISVDSALIYRGMDIGTAKPSRELLARYPHRLIDIRDPAESYSAAEFRADALAAMAKATARGRIPLLVGGTMLYYKALLEGLADMPGADPEVRAAIEAEAQAEGWEALHRQLAEVDPESAARIHPNDPQRLMRALEVYRLGGVSMSDLRRRQSAEKADFDASGRNQLPYTVAQLAIAPEQRQVLHARIAQRFRQMLEQGFIAEVEALHARSDLHAGLPSIRAVGYRQVWDYLDGKLSYAEMTERGIIATRQLAKRQFTWLRSWSHLHWMDSLAGDNLPRALKYLKTVSILA</sequence>
<organism>
    <name type="scientific">Pseudomonas aeruginosa (strain ATCC 15692 / DSM 22644 / CIP 104116 / JCM 14847 / LMG 12228 / 1C / PRS 101 / PAO1)</name>
    <dbReference type="NCBI Taxonomy" id="208964"/>
    <lineage>
        <taxon>Bacteria</taxon>
        <taxon>Pseudomonadati</taxon>
        <taxon>Pseudomonadota</taxon>
        <taxon>Gammaproteobacteria</taxon>
        <taxon>Pseudomonadales</taxon>
        <taxon>Pseudomonadaceae</taxon>
        <taxon>Pseudomonas</taxon>
    </lineage>
</organism>
<accession>Q9HUL9</accession>
<dbReference type="EC" id="2.5.1.75"/>
<dbReference type="EMBL" id="AE004091">
    <property type="protein sequence ID" value="AAG08330.1"/>
    <property type="molecule type" value="Genomic_DNA"/>
</dbReference>
<dbReference type="PIR" id="E83028">
    <property type="entry name" value="E83028"/>
</dbReference>
<dbReference type="RefSeq" id="NP_253632.1">
    <property type="nucleotide sequence ID" value="NC_002516.2"/>
</dbReference>
<dbReference type="RefSeq" id="WP_003113929.1">
    <property type="nucleotide sequence ID" value="NZ_QZGE01000002.1"/>
</dbReference>
<dbReference type="PDB" id="3CRM">
    <property type="method" value="X-ray"/>
    <property type="resolution" value="1.90 A"/>
    <property type="chains" value="A=1-323"/>
</dbReference>
<dbReference type="PDB" id="3CRQ">
    <property type="method" value="X-ray"/>
    <property type="resolution" value="2.20 A"/>
    <property type="chains" value="A=1-323"/>
</dbReference>
<dbReference type="PDB" id="3CRR">
    <property type="method" value="X-ray"/>
    <property type="resolution" value="1.90 A"/>
    <property type="chains" value="A=1-323"/>
</dbReference>
<dbReference type="PDBsum" id="3CRM"/>
<dbReference type="PDBsum" id="3CRQ"/>
<dbReference type="PDBsum" id="3CRR"/>
<dbReference type="SMR" id="Q9HUL9"/>
<dbReference type="FunCoup" id="Q9HUL9">
    <property type="interactions" value="613"/>
</dbReference>
<dbReference type="STRING" id="208964.PA4945"/>
<dbReference type="PaxDb" id="208964-PA4945"/>
<dbReference type="DNASU" id="878016"/>
<dbReference type="GeneID" id="878016"/>
<dbReference type="KEGG" id="pae:PA4945"/>
<dbReference type="PATRIC" id="fig|208964.12.peg.5178"/>
<dbReference type="PseudoCAP" id="PA4945"/>
<dbReference type="HOGENOM" id="CLU_032616_0_0_6"/>
<dbReference type="InParanoid" id="Q9HUL9"/>
<dbReference type="OrthoDB" id="9776390at2"/>
<dbReference type="PhylomeDB" id="Q9HUL9"/>
<dbReference type="BioCyc" id="PAER208964:G1FZ6-5061-MONOMER"/>
<dbReference type="EvolutionaryTrace" id="Q9HUL9"/>
<dbReference type="Proteomes" id="UP000002438">
    <property type="component" value="Chromosome"/>
</dbReference>
<dbReference type="GO" id="GO:0005524">
    <property type="term" value="F:ATP binding"/>
    <property type="evidence" value="ECO:0007669"/>
    <property type="project" value="UniProtKB-UniRule"/>
</dbReference>
<dbReference type="GO" id="GO:0052381">
    <property type="term" value="F:tRNA dimethylallyltransferase activity"/>
    <property type="evidence" value="ECO:0000318"/>
    <property type="project" value="GO_Central"/>
</dbReference>
<dbReference type="GO" id="GO:0006400">
    <property type="term" value="P:tRNA modification"/>
    <property type="evidence" value="ECO:0000318"/>
    <property type="project" value="GO_Central"/>
</dbReference>
<dbReference type="FunFam" id="1.10.20.140:FF:000001">
    <property type="entry name" value="tRNA dimethylallyltransferase"/>
    <property type="match status" value="1"/>
</dbReference>
<dbReference type="Gene3D" id="1.10.20.140">
    <property type="match status" value="1"/>
</dbReference>
<dbReference type="Gene3D" id="3.40.50.300">
    <property type="entry name" value="P-loop containing nucleotide triphosphate hydrolases"/>
    <property type="match status" value="1"/>
</dbReference>
<dbReference type="HAMAP" id="MF_00185">
    <property type="entry name" value="IPP_trans"/>
    <property type="match status" value="1"/>
</dbReference>
<dbReference type="InterPro" id="IPR039657">
    <property type="entry name" value="Dimethylallyltransferase"/>
</dbReference>
<dbReference type="InterPro" id="IPR018022">
    <property type="entry name" value="IPT"/>
</dbReference>
<dbReference type="InterPro" id="IPR027417">
    <property type="entry name" value="P-loop_NTPase"/>
</dbReference>
<dbReference type="NCBIfam" id="TIGR00174">
    <property type="entry name" value="miaA"/>
    <property type="match status" value="1"/>
</dbReference>
<dbReference type="PANTHER" id="PTHR11088">
    <property type="entry name" value="TRNA DIMETHYLALLYLTRANSFERASE"/>
    <property type="match status" value="1"/>
</dbReference>
<dbReference type="PANTHER" id="PTHR11088:SF60">
    <property type="entry name" value="TRNA DIMETHYLALLYLTRANSFERASE"/>
    <property type="match status" value="1"/>
</dbReference>
<dbReference type="Pfam" id="PF01715">
    <property type="entry name" value="IPPT"/>
    <property type="match status" value="1"/>
</dbReference>
<dbReference type="SUPFAM" id="SSF52540">
    <property type="entry name" value="P-loop containing nucleoside triphosphate hydrolases"/>
    <property type="match status" value="1"/>
</dbReference>
<comment type="function">
    <text>Catalyzes the transfer of a dimethylallyl group onto the adenine at position 37 in tRNAs that read codons beginning with uridine, leading to the formation of N6-(dimethylallyl)adenosine (i(6)A).</text>
</comment>
<comment type="catalytic activity">
    <reaction>
        <text>adenosine(37) in tRNA + dimethylallyl diphosphate = N(6)-dimethylallyladenosine(37) in tRNA + diphosphate</text>
        <dbReference type="Rhea" id="RHEA:26482"/>
        <dbReference type="Rhea" id="RHEA-COMP:10162"/>
        <dbReference type="Rhea" id="RHEA-COMP:10375"/>
        <dbReference type="ChEBI" id="CHEBI:33019"/>
        <dbReference type="ChEBI" id="CHEBI:57623"/>
        <dbReference type="ChEBI" id="CHEBI:74411"/>
        <dbReference type="ChEBI" id="CHEBI:74415"/>
        <dbReference type="EC" id="2.5.1.75"/>
    </reaction>
</comment>
<comment type="cofactor">
    <cofactor evidence="1">
        <name>Mg(2+)</name>
        <dbReference type="ChEBI" id="CHEBI:18420"/>
    </cofactor>
</comment>
<comment type="subunit">
    <text evidence="1">Monomer.</text>
</comment>
<comment type="similarity">
    <text evidence="3">Belongs to the IPP transferase family.</text>
</comment>
<name>MIAA_PSEAE</name>
<feature type="chain" id="PRO_0000163956" description="tRNA dimethylallyltransferase">
    <location>
        <begin position="1"/>
        <end position="323"/>
    </location>
</feature>
<feature type="region of interest" description="Interaction with substrate tRNA" evidence="1">
    <location>
        <begin position="37"/>
        <end position="40"/>
    </location>
</feature>
<feature type="region of interest" description="Interaction with substrate tRNA" evidence="1">
    <location>
        <begin position="161"/>
        <end position="165"/>
    </location>
</feature>
<feature type="region of interest" description="Interaction with substrate tRNA" evidence="1">
    <location>
        <begin position="253"/>
        <end position="258"/>
    </location>
</feature>
<feature type="region of interest" description="Interaction with substrate tRNA" evidence="1">
    <location>
        <begin position="286"/>
        <end position="293"/>
    </location>
</feature>
<feature type="binding site" evidence="2">
    <location>
        <begin position="12"/>
        <end position="19"/>
    </location>
    <ligand>
        <name>ATP</name>
        <dbReference type="ChEBI" id="CHEBI:30616"/>
    </ligand>
</feature>
<feature type="binding site" evidence="1">
    <location>
        <begin position="14"/>
        <end position="19"/>
    </location>
    <ligand>
        <name>substrate</name>
    </ligand>
</feature>
<feature type="site" description="Interaction with substrate tRNA" evidence="1">
    <location>
        <position position="103"/>
    </location>
</feature>
<feature type="site" description="Interaction with substrate tRNA" evidence="1">
    <location>
        <position position="125"/>
    </location>
</feature>
<feature type="strand" evidence="4">
    <location>
        <begin position="6"/>
        <end position="11"/>
    </location>
</feature>
<feature type="helix" evidence="4">
    <location>
        <begin position="18"/>
        <end position="28"/>
    </location>
</feature>
<feature type="strand" evidence="4">
    <location>
        <begin position="31"/>
        <end position="36"/>
    </location>
</feature>
<feature type="turn" evidence="4">
    <location>
        <begin position="38"/>
        <end position="41"/>
    </location>
</feature>
<feature type="turn" evidence="4">
    <location>
        <begin position="47"/>
        <end position="50"/>
    </location>
</feature>
<feature type="helix" evidence="4">
    <location>
        <begin position="54"/>
        <end position="59"/>
    </location>
</feature>
<feature type="strand" evidence="5">
    <location>
        <begin position="62"/>
        <end position="66"/>
    </location>
</feature>
<feature type="helix" evidence="4">
    <location>
        <begin position="76"/>
        <end position="92"/>
    </location>
</feature>
<feature type="strand" evidence="4">
    <location>
        <begin position="96"/>
        <end position="102"/>
    </location>
</feature>
<feature type="helix" evidence="4">
    <location>
        <begin position="104"/>
        <end position="111"/>
    </location>
</feature>
<feature type="strand" evidence="4">
    <location>
        <begin position="201"/>
        <end position="209"/>
    </location>
</feature>
<feature type="helix" evidence="4">
    <location>
        <begin position="213"/>
        <end position="229"/>
    </location>
</feature>
<feature type="helix" evidence="4">
    <location>
        <begin position="232"/>
        <end position="240"/>
    </location>
</feature>
<feature type="helix" evidence="4">
    <location>
        <begin position="251"/>
        <end position="253"/>
    </location>
</feature>
<feature type="helix" evidence="4">
    <location>
        <begin position="257"/>
        <end position="264"/>
    </location>
</feature>
<feature type="helix" evidence="4">
    <location>
        <begin position="270"/>
        <end position="293"/>
    </location>
</feature>
<feature type="strand" evidence="4">
    <location>
        <begin position="299"/>
        <end position="302"/>
    </location>
</feature>
<feature type="helix" evidence="4">
    <location>
        <begin position="308"/>
        <end position="318"/>
    </location>
</feature>
<keyword id="KW-0002">3D-structure</keyword>
<keyword id="KW-0067">ATP-binding</keyword>
<keyword id="KW-0460">Magnesium</keyword>
<keyword id="KW-0547">Nucleotide-binding</keyword>
<keyword id="KW-1185">Reference proteome</keyword>
<keyword id="KW-0808">Transferase</keyword>
<keyword id="KW-0819">tRNA processing</keyword>
<proteinExistence type="evidence at protein level"/>
<reference key="1">
    <citation type="journal article" date="2000" name="Nature">
        <title>Complete genome sequence of Pseudomonas aeruginosa PAO1, an opportunistic pathogen.</title>
        <authorList>
            <person name="Stover C.K."/>
            <person name="Pham X.-Q.T."/>
            <person name="Erwin A.L."/>
            <person name="Mizoguchi S.D."/>
            <person name="Warrener P."/>
            <person name="Hickey M.J."/>
            <person name="Brinkman F.S.L."/>
            <person name="Hufnagle W.O."/>
            <person name="Kowalik D.J."/>
            <person name="Lagrou M."/>
            <person name="Garber R.L."/>
            <person name="Goltry L."/>
            <person name="Tolentino E."/>
            <person name="Westbrock-Wadman S."/>
            <person name="Yuan Y."/>
            <person name="Brody L.L."/>
            <person name="Coulter S.N."/>
            <person name="Folger K.R."/>
            <person name="Kas A."/>
            <person name="Larbig K."/>
            <person name="Lim R.M."/>
            <person name="Smith K.A."/>
            <person name="Spencer D.H."/>
            <person name="Wong G.K.-S."/>
            <person name="Wu Z."/>
            <person name="Paulsen I.T."/>
            <person name="Reizer J."/>
            <person name="Saier M.H. Jr."/>
            <person name="Hancock R.E.W."/>
            <person name="Lory S."/>
            <person name="Olson M.V."/>
        </authorList>
    </citation>
    <scope>NUCLEOTIDE SEQUENCE [LARGE SCALE GENOMIC DNA]</scope>
    <source>
        <strain>ATCC 15692 / DSM 22644 / CIP 104116 / JCM 14847 / LMG 12228 / 1C / PRS 101 / PAO1</strain>
    </source>
</reference>
<reference key="2">
    <citation type="journal article" date="2007" name="J. Mol. Biol.">
        <title>Structure of tRNA dimethylallyltransferase: RNA modification through a channel.</title>
        <authorList>
            <person name="Xie W."/>
            <person name="Zhou C."/>
            <person name="Huang R.H."/>
        </authorList>
    </citation>
    <scope>X-RAY CRYSTALLOGRAPHY (1.9 ANGSTROMS) IN COMPLEX WITH PYROPHOSPHATE</scope>
</reference>
<protein>
    <recommendedName>
        <fullName>tRNA dimethylallyltransferase</fullName>
        <ecNumber>2.5.1.75</ecNumber>
    </recommendedName>
    <alternativeName>
        <fullName>Dimethylallyl diphosphate:tRNA dimethylallyltransferase</fullName>
        <shortName>DMAPP:tRNA dimethylallyltransferase</shortName>
        <shortName>DMATase</shortName>
    </alternativeName>
    <alternativeName>
        <fullName>Isopentenyl-diphosphate:tRNA isopentenyltransferase</fullName>
        <shortName>IPP transferase</shortName>
        <shortName>IPPT</shortName>
        <shortName>IPTase</shortName>
    </alternativeName>
</protein>
<evidence type="ECO:0000250" key="1"/>
<evidence type="ECO:0000255" key="2"/>
<evidence type="ECO:0000305" key="3"/>
<evidence type="ECO:0007829" key="4">
    <source>
        <dbReference type="PDB" id="3CRM"/>
    </source>
</evidence>
<evidence type="ECO:0007829" key="5">
    <source>
        <dbReference type="PDB" id="3CRQ"/>
    </source>
</evidence>
<gene>
    <name type="primary">miaA</name>
    <name type="ordered locus">PA4945</name>
</gene>